<comment type="function">
    <text evidence="1">Catalyzes the interconversion between ADP-D-glycero-beta-D-manno-heptose and ADP-L-glycero-beta-D-manno-heptose via an epimerization at carbon 6 of the heptose.</text>
</comment>
<comment type="catalytic activity">
    <reaction evidence="1">
        <text>ADP-D-glycero-beta-D-manno-heptose = ADP-L-glycero-beta-D-manno-heptose</text>
        <dbReference type="Rhea" id="RHEA:17577"/>
        <dbReference type="ChEBI" id="CHEBI:59967"/>
        <dbReference type="ChEBI" id="CHEBI:61506"/>
        <dbReference type="EC" id="5.1.3.20"/>
    </reaction>
</comment>
<comment type="cofactor">
    <cofactor evidence="1">
        <name>NADP(+)</name>
        <dbReference type="ChEBI" id="CHEBI:58349"/>
    </cofactor>
    <text evidence="1">Binds 1 NADP(+) per subunit.</text>
</comment>
<comment type="pathway">
    <text evidence="1">Nucleotide-sugar biosynthesis; ADP-L-glycero-beta-D-manno-heptose biosynthesis; ADP-L-glycero-beta-D-manno-heptose from D-glycero-beta-D-manno-heptose 7-phosphate: step 4/4.</text>
</comment>
<comment type="subunit">
    <text evidence="1">Homopentamer.</text>
</comment>
<comment type="domain">
    <text evidence="1">Contains a large N-terminal NADP-binding domain, and a smaller C-terminal substrate-binding domain.</text>
</comment>
<comment type="similarity">
    <text evidence="1">Belongs to the NAD(P)-dependent epimerase/dehydratase family. HldD subfamily.</text>
</comment>
<name>HLDD_SALPA</name>
<accession>Q5PC05</accession>
<sequence length="310" mass="34849">MIIVTGGAGFIGSNIVKALNDKGITDILVVDNLKDGTKFVNLVDLNIADYMDKEDFLIQIMSGEELGDIEAIFHEGACSSTTEWDGKYMMDNNYQYSKELLHYCLEREIPFLYASSAATYGGRTSDFIESREYEKPLNVYGYSKFLFDEYVRQILPEANSQIVGFRYFNVYGPREGHKGSMASVAFHLNTQLNNGESPKLFEGSENFKRDFVYVGDVAAVNLWFLESGKSGIFNLGTGRAESFQAVADATLAYHKKGSIEYIPFPDKLKGRYQAFTQADLTNLRNAGYDKPFKTVAEGVTEYMAWLNRDA</sequence>
<gene>
    <name evidence="1" type="primary">hldD</name>
    <name type="ordered locus">SPA3562</name>
</gene>
<feature type="chain" id="PRO_0000255741" description="ADP-L-glycero-D-manno-heptose-6-epimerase">
    <location>
        <begin position="1"/>
        <end position="310"/>
    </location>
</feature>
<feature type="active site" description="Proton acceptor" evidence="1">
    <location>
        <position position="140"/>
    </location>
</feature>
<feature type="active site" description="Proton acceptor" evidence="1">
    <location>
        <position position="178"/>
    </location>
</feature>
<feature type="binding site" evidence="1">
    <location>
        <begin position="10"/>
        <end position="11"/>
    </location>
    <ligand>
        <name>NADP(+)</name>
        <dbReference type="ChEBI" id="CHEBI:58349"/>
    </ligand>
</feature>
<feature type="binding site" evidence="1">
    <location>
        <begin position="31"/>
        <end position="32"/>
    </location>
    <ligand>
        <name>NADP(+)</name>
        <dbReference type="ChEBI" id="CHEBI:58349"/>
    </ligand>
</feature>
<feature type="binding site" evidence="1">
    <location>
        <position position="38"/>
    </location>
    <ligand>
        <name>NADP(+)</name>
        <dbReference type="ChEBI" id="CHEBI:58349"/>
    </ligand>
</feature>
<feature type="binding site" evidence="1">
    <location>
        <position position="53"/>
    </location>
    <ligand>
        <name>NADP(+)</name>
        <dbReference type="ChEBI" id="CHEBI:58349"/>
    </ligand>
</feature>
<feature type="binding site" evidence="1">
    <location>
        <begin position="75"/>
        <end position="79"/>
    </location>
    <ligand>
        <name>NADP(+)</name>
        <dbReference type="ChEBI" id="CHEBI:58349"/>
    </ligand>
</feature>
<feature type="binding site" evidence="1">
    <location>
        <position position="92"/>
    </location>
    <ligand>
        <name>NADP(+)</name>
        <dbReference type="ChEBI" id="CHEBI:58349"/>
    </ligand>
</feature>
<feature type="binding site" evidence="1">
    <location>
        <position position="144"/>
    </location>
    <ligand>
        <name>NADP(+)</name>
        <dbReference type="ChEBI" id="CHEBI:58349"/>
    </ligand>
</feature>
<feature type="binding site" evidence="1">
    <location>
        <position position="169"/>
    </location>
    <ligand>
        <name>substrate</name>
    </ligand>
</feature>
<feature type="binding site" evidence="1">
    <location>
        <position position="170"/>
    </location>
    <ligand>
        <name>NADP(+)</name>
        <dbReference type="ChEBI" id="CHEBI:58349"/>
    </ligand>
</feature>
<feature type="binding site" evidence="1">
    <location>
        <position position="178"/>
    </location>
    <ligand>
        <name>NADP(+)</name>
        <dbReference type="ChEBI" id="CHEBI:58349"/>
    </ligand>
</feature>
<feature type="binding site" evidence="1">
    <location>
        <position position="180"/>
    </location>
    <ligand>
        <name>substrate</name>
    </ligand>
</feature>
<feature type="binding site" evidence="1">
    <location>
        <position position="187"/>
    </location>
    <ligand>
        <name>substrate</name>
    </ligand>
</feature>
<feature type="binding site" evidence="1">
    <location>
        <begin position="201"/>
        <end position="204"/>
    </location>
    <ligand>
        <name>substrate</name>
    </ligand>
</feature>
<feature type="binding site" evidence="1">
    <location>
        <position position="209"/>
    </location>
    <ligand>
        <name>substrate</name>
    </ligand>
</feature>
<feature type="binding site" evidence="1">
    <location>
        <position position="272"/>
    </location>
    <ligand>
        <name>substrate</name>
    </ligand>
</feature>
<organism>
    <name type="scientific">Salmonella paratyphi A (strain ATCC 9150 / SARB42)</name>
    <dbReference type="NCBI Taxonomy" id="295319"/>
    <lineage>
        <taxon>Bacteria</taxon>
        <taxon>Pseudomonadati</taxon>
        <taxon>Pseudomonadota</taxon>
        <taxon>Gammaproteobacteria</taxon>
        <taxon>Enterobacterales</taxon>
        <taxon>Enterobacteriaceae</taxon>
        <taxon>Salmonella</taxon>
    </lineage>
</organism>
<protein>
    <recommendedName>
        <fullName evidence="1">ADP-L-glycero-D-manno-heptose-6-epimerase</fullName>
        <ecNumber evidence="1">5.1.3.20</ecNumber>
    </recommendedName>
    <alternativeName>
        <fullName evidence="1">ADP-L-glycero-beta-D-manno-heptose-6-epimerase</fullName>
        <shortName evidence="1">ADP-glyceromanno-heptose 6-epimerase</shortName>
        <shortName evidence="1">ADP-hep 6-epimerase</shortName>
        <shortName evidence="1">AGME</shortName>
    </alternativeName>
</protein>
<dbReference type="EC" id="5.1.3.20" evidence="1"/>
<dbReference type="EMBL" id="CP000026">
    <property type="protein sequence ID" value="AAV79363.1"/>
    <property type="molecule type" value="Genomic_DNA"/>
</dbReference>
<dbReference type="SMR" id="Q5PC05"/>
<dbReference type="KEGG" id="spt:SPA3562"/>
<dbReference type="HOGENOM" id="CLU_007383_1_3_6"/>
<dbReference type="UniPathway" id="UPA00356">
    <property type="reaction ID" value="UER00440"/>
</dbReference>
<dbReference type="Proteomes" id="UP000008185">
    <property type="component" value="Chromosome"/>
</dbReference>
<dbReference type="GO" id="GO:0008712">
    <property type="term" value="F:ADP-glyceromanno-heptose 6-epimerase activity"/>
    <property type="evidence" value="ECO:0007669"/>
    <property type="project" value="UniProtKB-UniRule"/>
</dbReference>
<dbReference type="GO" id="GO:0050661">
    <property type="term" value="F:NADP binding"/>
    <property type="evidence" value="ECO:0007669"/>
    <property type="project" value="InterPro"/>
</dbReference>
<dbReference type="GO" id="GO:0097171">
    <property type="term" value="P:ADP-L-glycero-beta-D-manno-heptose biosynthetic process"/>
    <property type="evidence" value="ECO:0007669"/>
    <property type="project" value="UniProtKB-UniPathway"/>
</dbReference>
<dbReference type="GO" id="GO:0005975">
    <property type="term" value="P:carbohydrate metabolic process"/>
    <property type="evidence" value="ECO:0007669"/>
    <property type="project" value="UniProtKB-UniRule"/>
</dbReference>
<dbReference type="CDD" id="cd05248">
    <property type="entry name" value="ADP_GME_SDR_e"/>
    <property type="match status" value="1"/>
</dbReference>
<dbReference type="Gene3D" id="3.40.50.720">
    <property type="entry name" value="NAD(P)-binding Rossmann-like Domain"/>
    <property type="match status" value="1"/>
</dbReference>
<dbReference type="Gene3D" id="3.90.25.10">
    <property type="entry name" value="UDP-galactose 4-epimerase, domain 1"/>
    <property type="match status" value="1"/>
</dbReference>
<dbReference type="HAMAP" id="MF_01601">
    <property type="entry name" value="Heptose_epimerase"/>
    <property type="match status" value="1"/>
</dbReference>
<dbReference type="InterPro" id="IPR001509">
    <property type="entry name" value="Epimerase_deHydtase"/>
</dbReference>
<dbReference type="InterPro" id="IPR011912">
    <property type="entry name" value="Heptose_epim"/>
</dbReference>
<dbReference type="InterPro" id="IPR036291">
    <property type="entry name" value="NAD(P)-bd_dom_sf"/>
</dbReference>
<dbReference type="NCBIfam" id="TIGR02197">
    <property type="entry name" value="heptose_epim"/>
    <property type="match status" value="1"/>
</dbReference>
<dbReference type="NCBIfam" id="NF008360">
    <property type="entry name" value="PRK11150.1"/>
    <property type="match status" value="1"/>
</dbReference>
<dbReference type="PANTHER" id="PTHR43103:SF3">
    <property type="entry name" value="ADP-L-GLYCERO-D-MANNO-HEPTOSE-6-EPIMERASE"/>
    <property type="match status" value="1"/>
</dbReference>
<dbReference type="PANTHER" id="PTHR43103">
    <property type="entry name" value="NUCLEOSIDE-DIPHOSPHATE-SUGAR EPIMERASE"/>
    <property type="match status" value="1"/>
</dbReference>
<dbReference type="Pfam" id="PF01370">
    <property type="entry name" value="Epimerase"/>
    <property type="match status" value="1"/>
</dbReference>
<dbReference type="SUPFAM" id="SSF51735">
    <property type="entry name" value="NAD(P)-binding Rossmann-fold domains"/>
    <property type="match status" value="1"/>
</dbReference>
<proteinExistence type="inferred from homology"/>
<evidence type="ECO:0000255" key="1">
    <source>
        <dbReference type="HAMAP-Rule" id="MF_01601"/>
    </source>
</evidence>
<reference key="1">
    <citation type="journal article" date="2004" name="Nat. Genet.">
        <title>Comparison of genome degradation in Paratyphi A and Typhi, human-restricted serovars of Salmonella enterica that cause typhoid.</title>
        <authorList>
            <person name="McClelland M."/>
            <person name="Sanderson K.E."/>
            <person name="Clifton S.W."/>
            <person name="Latreille P."/>
            <person name="Porwollik S."/>
            <person name="Sabo A."/>
            <person name="Meyer R."/>
            <person name="Bieri T."/>
            <person name="Ozersky P."/>
            <person name="McLellan M."/>
            <person name="Harkins C.R."/>
            <person name="Wang C."/>
            <person name="Nguyen C."/>
            <person name="Berghoff A."/>
            <person name="Elliott G."/>
            <person name="Kohlberg S."/>
            <person name="Strong C."/>
            <person name="Du F."/>
            <person name="Carter J."/>
            <person name="Kremizki C."/>
            <person name="Layman D."/>
            <person name="Leonard S."/>
            <person name="Sun H."/>
            <person name="Fulton L."/>
            <person name="Nash W."/>
            <person name="Miner T."/>
            <person name="Minx P."/>
            <person name="Delehaunty K."/>
            <person name="Fronick C."/>
            <person name="Magrini V."/>
            <person name="Nhan M."/>
            <person name="Warren W."/>
            <person name="Florea L."/>
            <person name="Spieth J."/>
            <person name="Wilson R.K."/>
        </authorList>
    </citation>
    <scope>NUCLEOTIDE SEQUENCE [LARGE SCALE GENOMIC DNA]</scope>
    <source>
        <strain>ATCC 9150 / SARB42</strain>
    </source>
</reference>
<keyword id="KW-0119">Carbohydrate metabolism</keyword>
<keyword id="KW-0413">Isomerase</keyword>
<keyword id="KW-0521">NADP</keyword>